<reference key="1">
    <citation type="journal article" date="2007" name="PLoS ONE">
        <title>Genome sequencing shows that European isolates of Francisella tularensis subspecies tularensis are almost identical to US laboratory strain Schu S4.</title>
        <authorList>
            <person name="Chaudhuri R.R."/>
            <person name="Ren C.-P."/>
            <person name="Desmond L."/>
            <person name="Vincent G.A."/>
            <person name="Silman N.J."/>
            <person name="Brehm J.K."/>
            <person name="Elmore M.J."/>
            <person name="Hudson M.J."/>
            <person name="Forsman M."/>
            <person name="Isherwood K.E."/>
            <person name="Gurycova D."/>
            <person name="Minton N.P."/>
            <person name="Titball R.W."/>
            <person name="Pallen M.J."/>
            <person name="Vipond R."/>
        </authorList>
    </citation>
    <scope>NUCLEOTIDE SEQUENCE [LARGE SCALE GENOMIC DNA]</scope>
    <source>
        <strain>FSC 198</strain>
    </source>
</reference>
<name>GLGA_FRAT1</name>
<gene>
    <name evidence="1" type="primary">glgA</name>
    <name type="ordered locus">FTF0416</name>
</gene>
<evidence type="ECO:0000255" key="1">
    <source>
        <dbReference type="HAMAP-Rule" id="MF_00484"/>
    </source>
</evidence>
<protein>
    <recommendedName>
        <fullName evidence="1">Glycogen synthase</fullName>
        <ecNumber evidence="1">2.4.1.21</ecNumber>
    </recommendedName>
    <alternativeName>
        <fullName evidence="1">Starch [bacterial glycogen] synthase</fullName>
    </alternativeName>
</protein>
<comment type="function">
    <text evidence="1">Synthesizes alpha-1,4-glucan chains using ADP-glucose.</text>
</comment>
<comment type="catalytic activity">
    <reaction evidence="1">
        <text>[(1-&gt;4)-alpha-D-glucosyl](n) + ADP-alpha-D-glucose = [(1-&gt;4)-alpha-D-glucosyl](n+1) + ADP + H(+)</text>
        <dbReference type="Rhea" id="RHEA:18189"/>
        <dbReference type="Rhea" id="RHEA-COMP:9584"/>
        <dbReference type="Rhea" id="RHEA-COMP:9587"/>
        <dbReference type="ChEBI" id="CHEBI:15378"/>
        <dbReference type="ChEBI" id="CHEBI:15444"/>
        <dbReference type="ChEBI" id="CHEBI:57498"/>
        <dbReference type="ChEBI" id="CHEBI:456216"/>
        <dbReference type="EC" id="2.4.1.21"/>
    </reaction>
</comment>
<comment type="pathway">
    <text evidence="1">Glycan biosynthesis; glycogen biosynthesis.</text>
</comment>
<comment type="similarity">
    <text evidence="1">Belongs to the glycosyltransferase 1 family. Bacterial/plant glycogen synthase subfamily.</text>
</comment>
<organism>
    <name type="scientific">Francisella tularensis subsp. tularensis (strain FSC 198)</name>
    <dbReference type="NCBI Taxonomy" id="393115"/>
    <lineage>
        <taxon>Bacteria</taxon>
        <taxon>Pseudomonadati</taxon>
        <taxon>Pseudomonadota</taxon>
        <taxon>Gammaproteobacteria</taxon>
        <taxon>Thiotrichales</taxon>
        <taxon>Francisellaceae</taxon>
        <taxon>Francisella</taxon>
    </lineage>
</organism>
<dbReference type="EC" id="2.4.1.21" evidence="1"/>
<dbReference type="EMBL" id="AM286280">
    <property type="protein sequence ID" value="CAL08432.1"/>
    <property type="molecule type" value="Genomic_DNA"/>
</dbReference>
<dbReference type="RefSeq" id="WP_003020156.1">
    <property type="nucleotide sequence ID" value="NC_008245.1"/>
</dbReference>
<dbReference type="SMR" id="Q14J34"/>
<dbReference type="CAZy" id="GT5">
    <property type="family name" value="Glycosyltransferase Family 5"/>
</dbReference>
<dbReference type="KEGG" id="ftf:FTF0416"/>
<dbReference type="HOGENOM" id="CLU_009583_18_2_6"/>
<dbReference type="UniPathway" id="UPA00164"/>
<dbReference type="GO" id="GO:0005829">
    <property type="term" value="C:cytosol"/>
    <property type="evidence" value="ECO:0007669"/>
    <property type="project" value="TreeGrafter"/>
</dbReference>
<dbReference type="GO" id="GO:0009011">
    <property type="term" value="F:alpha-1,4-glucan glucosyltransferase (ADP-glucose donor) activity"/>
    <property type="evidence" value="ECO:0007669"/>
    <property type="project" value="UniProtKB-UniRule"/>
</dbReference>
<dbReference type="GO" id="GO:0004373">
    <property type="term" value="F:alpha-1,4-glucan glucosyltransferase (UDP-glucose donor) activity"/>
    <property type="evidence" value="ECO:0007669"/>
    <property type="project" value="InterPro"/>
</dbReference>
<dbReference type="GO" id="GO:0005978">
    <property type="term" value="P:glycogen biosynthetic process"/>
    <property type="evidence" value="ECO:0007669"/>
    <property type="project" value="UniProtKB-UniRule"/>
</dbReference>
<dbReference type="CDD" id="cd03791">
    <property type="entry name" value="GT5_Glycogen_synthase_DULL1-like"/>
    <property type="match status" value="1"/>
</dbReference>
<dbReference type="Gene3D" id="3.40.50.2000">
    <property type="entry name" value="Glycogen Phosphorylase B"/>
    <property type="match status" value="2"/>
</dbReference>
<dbReference type="HAMAP" id="MF_00484">
    <property type="entry name" value="Glycogen_synth"/>
    <property type="match status" value="1"/>
</dbReference>
<dbReference type="InterPro" id="IPR001296">
    <property type="entry name" value="Glyco_trans_1"/>
</dbReference>
<dbReference type="InterPro" id="IPR011835">
    <property type="entry name" value="GS/SS"/>
</dbReference>
<dbReference type="InterPro" id="IPR013534">
    <property type="entry name" value="Starch_synth_cat_dom"/>
</dbReference>
<dbReference type="NCBIfam" id="TIGR02095">
    <property type="entry name" value="glgA"/>
    <property type="match status" value="1"/>
</dbReference>
<dbReference type="NCBIfam" id="NF001899">
    <property type="entry name" value="PRK00654.1-2"/>
    <property type="match status" value="1"/>
</dbReference>
<dbReference type="PANTHER" id="PTHR45825:SF11">
    <property type="entry name" value="ALPHA AMYLASE DOMAIN-CONTAINING PROTEIN"/>
    <property type="match status" value="1"/>
</dbReference>
<dbReference type="PANTHER" id="PTHR45825">
    <property type="entry name" value="GRANULE-BOUND STARCH SYNTHASE 1, CHLOROPLASTIC/AMYLOPLASTIC"/>
    <property type="match status" value="1"/>
</dbReference>
<dbReference type="Pfam" id="PF08323">
    <property type="entry name" value="Glyco_transf_5"/>
    <property type="match status" value="1"/>
</dbReference>
<dbReference type="Pfam" id="PF00534">
    <property type="entry name" value="Glycos_transf_1"/>
    <property type="match status" value="1"/>
</dbReference>
<dbReference type="SUPFAM" id="SSF53756">
    <property type="entry name" value="UDP-Glycosyltransferase/glycogen phosphorylase"/>
    <property type="match status" value="1"/>
</dbReference>
<feature type="chain" id="PRO_1000014355" description="Glycogen synthase">
    <location>
        <begin position="1"/>
        <end position="489"/>
    </location>
</feature>
<feature type="binding site" evidence="1">
    <location>
        <position position="15"/>
    </location>
    <ligand>
        <name>ADP-alpha-D-glucose</name>
        <dbReference type="ChEBI" id="CHEBI:57498"/>
    </ligand>
</feature>
<accession>Q14J34</accession>
<sequence>MRVLHVCSELYPILKTGGLADVTAALPPALAGFGVDSRVLVPGFPAFINAIKDKQLLINIPSRFGAEEINIFLAKISNTKIDIYVIDAPSLFARPGNPYADSSNQAYADNYLRFALLGWVAARISEGLDAKWKPEIVHSHDWHAGLVPAYIKASELASGKKAVKTVFTVHNLAYQGLFPMSVFAELDLPGIFLSMNGLEFYGQVSFMKAGLYFADKITTVSPTYAKEIQIYEQGCGLEGLLADRHNDLYGVLNGVDPQIWNPKKDSLIATNYSSTTVATGKAKCKLALQQMMGLAEKEDALLFGIVTRLTEQKGLNLLIEAIGEITSRGGQIVLLGSGDKALEEVFLAAAKKYSKSIAVQIGYDEEQAHRIIAGSDVIMVPSRFEPCGLTQLYGLTYGTLPLVHKVGGLADTVIDSSLENLADGTATGFVFDEFSVESLTLAIRRAFALYNRKTDWKKVRKTAMQQQVTWDSSAEKIYQIYKNLVRENN</sequence>
<proteinExistence type="inferred from homology"/>
<keyword id="KW-0320">Glycogen biosynthesis</keyword>
<keyword id="KW-0328">Glycosyltransferase</keyword>
<keyword id="KW-0808">Transferase</keyword>